<accession>B1MYC1</accession>
<keyword id="KW-0067">ATP-binding</keyword>
<keyword id="KW-0460">Magnesium</keyword>
<keyword id="KW-0479">Metal-binding</keyword>
<keyword id="KW-0547">Nucleotide-binding</keyword>
<keyword id="KW-0548">Nucleotidyltransferase</keyword>
<keyword id="KW-1185">Reference proteome</keyword>
<keyword id="KW-0692">RNA repair</keyword>
<keyword id="KW-0694">RNA-binding</keyword>
<keyword id="KW-0808">Transferase</keyword>
<keyword id="KW-0819">tRNA processing</keyword>
<dbReference type="EC" id="2.7.7.72" evidence="1"/>
<dbReference type="EMBL" id="DQ489736">
    <property type="protein sequence ID" value="ACA82523.1"/>
    <property type="molecule type" value="Genomic_DNA"/>
</dbReference>
<dbReference type="RefSeq" id="WP_004907193.1">
    <property type="nucleotide sequence ID" value="NC_010471.1"/>
</dbReference>
<dbReference type="SMR" id="B1MYC1"/>
<dbReference type="STRING" id="349519.LCK_00691"/>
<dbReference type="KEGG" id="lci:LCK_00691"/>
<dbReference type="eggNOG" id="COG0617">
    <property type="taxonomic scope" value="Bacteria"/>
</dbReference>
<dbReference type="HOGENOM" id="CLU_015961_3_1_9"/>
<dbReference type="OrthoDB" id="9805698at2"/>
<dbReference type="Proteomes" id="UP000002166">
    <property type="component" value="Chromosome"/>
</dbReference>
<dbReference type="GO" id="GO:0005524">
    <property type="term" value="F:ATP binding"/>
    <property type="evidence" value="ECO:0007669"/>
    <property type="project" value="UniProtKB-UniRule"/>
</dbReference>
<dbReference type="GO" id="GO:0004810">
    <property type="term" value="F:CCA tRNA nucleotidyltransferase activity"/>
    <property type="evidence" value="ECO:0007669"/>
    <property type="project" value="UniProtKB-UniRule"/>
</dbReference>
<dbReference type="GO" id="GO:0000287">
    <property type="term" value="F:magnesium ion binding"/>
    <property type="evidence" value="ECO:0007669"/>
    <property type="project" value="UniProtKB-UniRule"/>
</dbReference>
<dbReference type="GO" id="GO:0000049">
    <property type="term" value="F:tRNA binding"/>
    <property type="evidence" value="ECO:0007669"/>
    <property type="project" value="UniProtKB-UniRule"/>
</dbReference>
<dbReference type="GO" id="GO:0042245">
    <property type="term" value="P:RNA repair"/>
    <property type="evidence" value="ECO:0007669"/>
    <property type="project" value="UniProtKB-KW"/>
</dbReference>
<dbReference type="GO" id="GO:0001680">
    <property type="term" value="P:tRNA 3'-terminal CCA addition"/>
    <property type="evidence" value="ECO:0007669"/>
    <property type="project" value="UniProtKB-UniRule"/>
</dbReference>
<dbReference type="CDD" id="cd05398">
    <property type="entry name" value="NT_ClassII-CCAase"/>
    <property type="match status" value="1"/>
</dbReference>
<dbReference type="Gene3D" id="1.10.246.80">
    <property type="match status" value="1"/>
</dbReference>
<dbReference type="Gene3D" id="3.30.460.10">
    <property type="entry name" value="Beta Polymerase, domain 2"/>
    <property type="match status" value="1"/>
</dbReference>
<dbReference type="Gene3D" id="1.10.3090.10">
    <property type="entry name" value="cca-adding enzyme, domain 2"/>
    <property type="match status" value="1"/>
</dbReference>
<dbReference type="HAMAP" id="MF_01263">
    <property type="entry name" value="CCA_bact_type3"/>
    <property type="match status" value="1"/>
</dbReference>
<dbReference type="InterPro" id="IPR050264">
    <property type="entry name" value="Bact_CCA-adding_enz_type3_sf"/>
</dbReference>
<dbReference type="InterPro" id="IPR032810">
    <property type="entry name" value="CCA-adding_enz_C"/>
</dbReference>
<dbReference type="InterPro" id="IPR023068">
    <property type="entry name" value="CCA-adding_enz_firmicutes"/>
</dbReference>
<dbReference type="InterPro" id="IPR043519">
    <property type="entry name" value="NT_sf"/>
</dbReference>
<dbReference type="InterPro" id="IPR002646">
    <property type="entry name" value="PolA_pol_head_dom"/>
</dbReference>
<dbReference type="InterPro" id="IPR032828">
    <property type="entry name" value="PolyA_RNA-bd"/>
</dbReference>
<dbReference type="NCBIfam" id="NF009814">
    <property type="entry name" value="PRK13299.1"/>
    <property type="match status" value="1"/>
</dbReference>
<dbReference type="PANTHER" id="PTHR46173">
    <property type="entry name" value="CCA TRNA NUCLEOTIDYLTRANSFERASE 1, MITOCHONDRIAL"/>
    <property type="match status" value="1"/>
</dbReference>
<dbReference type="PANTHER" id="PTHR46173:SF1">
    <property type="entry name" value="CCA TRNA NUCLEOTIDYLTRANSFERASE 1, MITOCHONDRIAL"/>
    <property type="match status" value="1"/>
</dbReference>
<dbReference type="Pfam" id="PF01743">
    <property type="entry name" value="PolyA_pol"/>
    <property type="match status" value="1"/>
</dbReference>
<dbReference type="Pfam" id="PF12627">
    <property type="entry name" value="PolyA_pol_RNAbd"/>
    <property type="match status" value="1"/>
</dbReference>
<dbReference type="Pfam" id="PF13735">
    <property type="entry name" value="tRNA_NucTran2_2"/>
    <property type="match status" value="1"/>
</dbReference>
<dbReference type="SUPFAM" id="SSF81301">
    <property type="entry name" value="Nucleotidyltransferase"/>
    <property type="match status" value="1"/>
</dbReference>
<dbReference type="SUPFAM" id="SSF81891">
    <property type="entry name" value="Poly A polymerase C-terminal region-like"/>
    <property type="match status" value="1"/>
</dbReference>
<name>CCA_LEUCK</name>
<comment type="function">
    <text evidence="1">Catalyzes the addition and repair of the essential 3'-terminal CCA sequence in tRNAs without using a nucleic acid template. Adds these three nucleotides in the order of C, C, and A to the tRNA nucleotide-73, using CTP and ATP as substrates and producing inorganic pyrophosphate. tRNA 3'-terminal CCA addition is required both for tRNA processing and repair. Also involved in tRNA surveillance by mediating tandem CCA addition to generate a CCACCA at the 3' terminus of unstable tRNAs. While stable tRNAs receive only 3'-terminal CCA, unstable tRNAs are marked with CCACCA and rapidly degraded.</text>
</comment>
<comment type="catalytic activity">
    <reaction evidence="1">
        <text>a tRNA precursor + 2 CTP + ATP = a tRNA with a 3' CCA end + 3 diphosphate</text>
        <dbReference type="Rhea" id="RHEA:14433"/>
        <dbReference type="Rhea" id="RHEA-COMP:10465"/>
        <dbReference type="Rhea" id="RHEA-COMP:10468"/>
        <dbReference type="ChEBI" id="CHEBI:30616"/>
        <dbReference type="ChEBI" id="CHEBI:33019"/>
        <dbReference type="ChEBI" id="CHEBI:37563"/>
        <dbReference type="ChEBI" id="CHEBI:74896"/>
        <dbReference type="ChEBI" id="CHEBI:83071"/>
        <dbReference type="EC" id="2.7.7.72"/>
    </reaction>
</comment>
<comment type="catalytic activity">
    <reaction evidence="1">
        <text>a tRNA with a 3' CCA end + 2 CTP + ATP = a tRNA with a 3' CCACCA end + 3 diphosphate</text>
        <dbReference type="Rhea" id="RHEA:76235"/>
        <dbReference type="Rhea" id="RHEA-COMP:10468"/>
        <dbReference type="Rhea" id="RHEA-COMP:18655"/>
        <dbReference type="ChEBI" id="CHEBI:30616"/>
        <dbReference type="ChEBI" id="CHEBI:33019"/>
        <dbReference type="ChEBI" id="CHEBI:37563"/>
        <dbReference type="ChEBI" id="CHEBI:83071"/>
        <dbReference type="ChEBI" id="CHEBI:195187"/>
    </reaction>
    <physiologicalReaction direction="left-to-right" evidence="1">
        <dbReference type="Rhea" id="RHEA:76236"/>
    </physiologicalReaction>
</comment>
<comment type="cofactor">
    <cofactor evidence="1">
        <name>Mg(2+)</name>
        <dbReference type="ChEBI" id="CHEBI:18420"/>
    </cofactor>
</comment>
<comment type="subunit">
    <text evidence="1">Homodimer.</text>
</comment>
<comment type="miscellaneous">
    <text evidence="1">A single active site specifically recognizes both ATP and CTP and is responsible for their addition.</text>
</comment>
<comment type="similarity">
    <text evidence="1">Belongs to the tRNA nucleotidyltransferase/poly(A) polymerase family. Bacterial CCA-adding enzyme type 3 subfamily.</text>
</comment>
<reference key="1">
    <citation type="journal article" date="2008" name="J. Bacteriol.">
        <title>Complete genome sequence of Leuconostoc citreum KM20.</title>
        <authorList>
            <person name="Kim J.F."/>
            <person name="Jeong H."/>
            <person name="Lee J.-S."/>
            <person name="Choi S.-H."/>
            <person name="Ha M."/>
            <person name="Hur C.-G."/>
            <person name="Kim J.-S."/>
            <person name="Lee S."/>
            <person name="Park H.-S."/>
            <person name="Park Y.-H."/>
            <person name="Oh T.K."/>
        </authorList>
    </citation>
    <scope>NUCLEOTIDE SEQUENCE [LARGE SCALE GENOMIC DNA]</scope>
    <source>
        <strain>KM20</strain>
    </source>
</reference>
<organism>
    <name type="scientific">Leuconostoc citreum (strain KM20)</name>
    <dbReference type="NCBI Taxonomy" id="349519"/>
    <lineage>
        <taxon>Bacteria</taxon>
        <taxon>Bacillati</taxon>
        <taxon>Bacillota</taxon>
        <taxon>Bacilli</taxon>
        <taxon>Lactobacillales</taxon>
        <taxon>Lactobacillaceae</taxon>
        <taxon>Leuconostoc</taxon>
    </lineage>
</organism>
<gene>
    <name evidence="1" type="primary">cca</name>
    <name type="ordered locus">LCK_00691</name>
</gene>
<evidence type="ECO:0000255" key="1">
    <source>
        <dbReference type="HAMAP-Rule" id="MF_01263"/>
    </source>
</evidence>
<feature type="chain" id="PRO_1000140076" description="CCA-adding enzyme">
    <location>
        <begin position="1"/>
        <end position="403"/>
    </location>
</feature>
<feature type="binding site" evidence="1">
    <location>
        <position position="32"/>
    </location>
    <ligand>
        <name>ATP</name>
        <dbReference type="ChEBI" id="CHEBI:30616"/>
    </ligand>
</feature>
<feature type="binding site" evidence="1">
    <location>
        <position position="32"/>
    </location>
    <ligand>
        <name>CTP</name>
        <dbReference type="ChEBI" id="CHEBI:37563"/>
    </ligand>
</feature>
<feature type="binding site" evidence="1">
    <location>
        <position position="35"/>
    </location>
    <ligand>
        <name>ATP</name>
        <dbReference type="ChEBI" id="CHEBI:30616"/>
    </ligand>
</feature>
<feature type="binding site" evidence="1">
    <location>
        <position position="35"/>
    </location>
    <ligand>
        <name>CTP</name>
        <dbReference type="ChEBI" id="CHEBI:37563"/>
    </ligand>
</feature>
<feature type="binding site" evidence="1">
    <location>
        <position position="45"/>
    </location>
    <ligand>
        <name>Mg(2+)</name>
        <dbReference type="ChEBI" id="CHEBI:18420"/>
    </ligand>
</feature>
<feature type="binding site" evidence="1">
    <location>
        <position position="47"/>
    </location>
    <ligand>
        <name>Mg(2+)</name>
        <dbReference type="ChEBI" id="CHEBI:18420"/>
    </ligand>
</feature>
<feature type="binding site" evidence="1">
    <location>
        <position position="116"/>
    </location>
    <ligand>
        <name>ATP</name>
        <dbReference type="ChEBI" id="CHEBI:30616"/>
    </ligand>
</feature>
<feature type="binding site" evidence="1">
    <location>
        <position position="116"/>
    </location>
    <ligand>
        <name>CTP</name>
        <dbReference type="ChEBI" id="CHEBI:37563"/>
    </ligand>
</feature>
<feature type="binding site" evidence="1">
    <location>
        <position position="159"/>
    </location>
    <ligand>
        <name>ATP</name>
        <dbReference type="ChEBI" id="CHEBI:30616"/>
    </ligand>
</feature>
<feature type="binding site" evidence="1">
    <location>
        <position position="159"/>
    </location>
    <ligand>
        <name>CTP</name>
        <dbReference type="ChEBI" id="CHEBI:37563"/>
    </ligand>
</feature>
<feature type="binding site" evidence="1">
    <location>
        <position position="162"/>
    </location>
    <ligand>
        <name>ATP</name>
        <dbReference type="ChEBI" id="CHEBI:30616"/>
    </ligand>
</feature>
<feature type="binding site" evidence="1">
    <location>
        <position position="162"/>
    </location>
    <ligand>
        <name>CTP</name>
        <dbReference type="ChEBI" id="CHEBI:37563"/>
    </ligand>
</feature>
<feature type="binding site" evidence="1">
    <location>
        <position position="165"/>
    </location>
    <ligand>
        <name>ATP</name>
        <dbReference type="ChEBI" id="CHEBI:30616"/>
    </ligand>
</feature>
<feature type="binding site" evidence="1">
    <location>
        <position position="165"/>
    </location>
    <ligand>
        <name>CTP</name>
        <dbReference type="ChEBI" id="CHEBI:37563"/>
    </ligand>
</feature>
<feature type="binding site" evidence="1">
    <location>
        <position position="168"/>
    </location>
    <ligand>
        <name>ATP</name>
        <dbReference type="ChEBI" id="CHEBI:30616"/>
    </ligand>
</feature>
<feature type="binding site" evidence="1">
    <location>
        <position position="168"/>
    </location>
    <ligand>
        <name>CTP</name>
        <dbReference type="ChEBI" id="CHEBI:37563"/>
    </ligand>
</feature>
<sequence length="403" mass="45866">MKISTLPQEFMQAQPILEHIESAGFEAYFVGGAVRDMLLNKPIHDVDIATSAFPEEIKALFTKTVDTGIQHGTVMVLDHGDGYEITTFRTESTYTDFRRPDKVTFVRSLAEDLKRRDFTINAIAMTKDGDIIDLFDGLTDMAQKRIRAVGDAEVRFNEDALRIMRALRFSAQLGFDIAPHTKAALKQIGRNLEKIAVERIRVEFEKLLMGQYASNSLSVAIEADLIRYLPGHIKKEDWLTITADLKRNQPQARTVIWPYFLSRLSLRLNELQLFMRSWKTSREDMRAVLSIVPIVKHVQTVSVFELYAIYDYQALLFEVLTLIGTPLATQQRVKQIFDALPITHNRDMCISGGDLLANNIVTPGPQMGRILTQLEHAVIQRIISNRPDSLLEYAKELVDNEKN</sequence>
<protein>
    <recommendedName>
        <fullName evidence="1">CCA-adding enzyme</fullName>
        <ecNumber evidence="1">2.7.7.72</ecNumber>
    </recommendedName>
    <alternativeName>
        <fullName evidence="1">CCA tRNA nucleotidyltransferase</fullName>
    </alternativeName>
    <alternativeName>
        <fullName evidence="1">tRNA CCA-pyrophosphorylase</fullName>
    </alternativeName>
    <alternativeName>
        <fullName evidence="1">tRNA adenylyl-/cytidylyl- transferase</fullName>
    </alternativeName>
    <alternativeName>
        <fullName evidence="1">tRNA nucleotidyltransferase</fullName>
    </alternativeName>
    <alternativeName>
        <fullName evidence="1">tRNA-NT</fullName>
    </alternativeName>
</protein>
<proteinExistence type="inferred from homology"/>